<accession>Q9PJG0</accession>
<name>SAMHT_CHLMU</name>
<keyword id="KW-1003">Cell membrane</keyword>
<keyword id="KW-0472">Membrane</keyword>
<keyword id="KW-0677">Repeat</keyword>
<keyword id="KW-0812">Transmembrane</keyword>
<keyword id="KW-1133">Transmembrane helix</keyword>
<keyword id="KW-0813">Transport</keyword>
<reference key="1">
    <citation type="journal article" date="2000" name="Nucleic Acids Res.">
        <title>Genome sequences of Chlamydia trachomatis MoPn and Chlamydia pneumoniae AR39.</title>
        <authorList>
            <person name="Read T.D."/>
            <person name="Brunham R.C."/>
            <person name="Shen C."/>
            <person name="Gill S.R."/>
            <person name="Heidelberg J.F."/>
            <person name="White O."/>
            <person name="Hickey E.K."/>
            <person name="Peterson J.D."/>
            <person name="Utterback T.R."/>
            <person name="Berry K.J."/>
            <person name="Bass S."/>
            <person name="Linher K.D."/>
            <person name="Weidman J.F."/>
            <person name="Khouri H.M."/>
            <person name="Craven B."/>
            <person name="Bowman C."/>
            <person name="Dodson R.J."/>
            <person name="Gwinn M.L."/>
            <person name="Nelson W.C."/>
            <person name="DeBoy R.T."/>
            <person name="Kolonay J.F."/>
            <person name="McClarty G."/>
            <person name="Salzberg S.L."/>
            <person name="Eisen J.A."/>
            <person name="Fraser C.M."/>
        </authorList>
    </citation>
    <scope>NUCLEOTIDE SEQUENCE [LARGE SCALE GENOMIC DNA]</scope>
    <source>
        <strain>MoPn / Nigg</strain>
    </source>
</reference>
<feature type="chain" id="PRO_0000414247" description="S-adenosylmethionine/S-adenosylhomocysteine transporter">
    <location>
        <begin position="1"/>
        <end position="318"/>
    </location>
</feature>
<feature type="transmembrane region" description="Helical" evidence="2">
    <location>
        <begin position="7"/>
        <end position="27"/>
    </location>
</feature>
<feature type="transmembrane region" description="Helical" evidence="2">
    <location>
        <begin position="44"/>
        <end position="64"/>
    </location>
</feature>
<feature type="transmembrane region" description="Helical" evidence="2">
    <location>
        <begin position="76"/>
        <end position="96"/>
    </location>
</feature>
<feature type="transmembrane region" description="Helical" evidence="2">
    <location>
        <begin position="105"/>
        <end position="125"/>
    </location>
</feature>
<feature type="transmembrane region" description="Helical" evidence="2">
    <location>
        <begin position="134"/>
        <end position="154"/>
    </location>
</feature>
<feature type="transmembrane region" description="Helical" evidence="2">
    <location>
        <begin position="163"/>
        <end position="183"/>
    </location>
</feature>
<feature type="transmembrane region" description="Helical" evidence="2">
    <location>
        <begin position="193"/>
        <end position="213"/>
    </location>
</feature>
<feature type="transmembrane region" description="Helical" evidence="2">
    <location>
        <begin position="231"/>
        <end position="251"/>
    </location>
</feature>
<feature type="transmembrane region" description="Helical" evidence="2">
    <location>
        <begin position="262"/>
        <end position="282"/>
    </location>
</feature>
<feature type="transmembrane region" description="Helical" evidence="2">
    <location>
        <begin position="285"/>
        <end position="305"/>
    </location>
</feature>
<feature type="domain" description="EamA 1">
    <location>
        <begin position="25"/>
        <end position="148"/>
    </location>
</feature>
<feature type="domain" description="EamA 2">
    <location>
        <begin position="191"/>
        <end position="304"/>
    </location>
</feature>
<dbReference type="EMBL" id="AE002160">
    <property type="protein sequence ID" value="AAF39665.1"/>
    <property type="molecule type" value="Genomic_DNA"/>
</dbReference>
<dbReference type="PIR" id="H81655">
    <property type="entry name" value="H81655"/>
</dbReference>
<dbReference type="SMR" id="Q9PJG0"/>
<dbReference type="KEGG" id="cmu:TC_0869"/>
<dbReference type="eggNOG" id="COG0697">
    <property type="taxonomic scope" value="Bacteria"/>
</dbReference>
<dbReference type="HOGENOM" id="CLU_080359_0_0_0"/>
<dbReference type="Proteomes" id="UP000000800">
    <property type="component" value="Chromosome"/>
</dbReference>
<dbReference type="GO" id="GO:0005886">
    <property type="term" value="C:plasma membrane"/>
    <property type="evidence" value="ECO:0007669"/>
    <property type="project" value="UniProtKB-SubCell"/>
</dbReference>
<dbReference type="InterPro" id="IPR050638">
    <property type="entry name" value="AA-Vitamin_Transporters"/>
</dbReference>
<dbReference type="InterPro" id="IPR000620">
    <property type="entry name" value="EamA_dom"/>
</dbReference>
<dbReference type="PANTHER" id="PTHR32322">
    <property type="entry name" value="INNER MEMBRANE TRANSPORTER"/>
    <property type="match status" value="1"/>
</dbReference>
<dbReference type="PANTHER" id="PTHR32322:SF18">
    <property type="entry name" value="S-ADENOSYLMETHIONINE_S-ADENOSYLHOMOCYSTEINE TRANSPORTER"/>
    <property type="match status" value="1"/>
</dbReference>
<dbReference type="Pfam" id="PF00892">
    <property type="entry name" value="EamA"/>
    <property type="match status" value="2"/>
</dbReference>
<dbReference type="SUPFAM" id="SSF103481">
    <property type="entry name" value="Multidrug resistance efflux transporter EmrE"/>
    <property type="match status" value="2"/>
</dbReference>
<evidence type="ECO:0000250" key="1"/>
<evidence type="ECO:0000255" key="2"/>
<evidence type="ECO:0000305" key="3"/>
<proteinExistence type="inferred from homology"/>
<gene>
    <name type="ordered locus">TC_0869</name>
</gene>
<comment type="function">
    <text evidence="1">Transports S-adenosylmethionine (SAM) and S-adenosylhomocysteine (SAH). Allows bacteria to acquire SAM from the eukaryotic host cell and to likely remove the toxic by-product SAH (By similarity).</text>
</comment>
<comment type="subcellular location">
    <subcellularLocation>
        <location evidence="3">Cell membrane</location>
        <topology evidence="3">Multi-pass membrane protein</topology>
    </subcellularLocation>
</comment>
<comment type="similarity">
    <text evidence="3">Belongs to the drug/metabolite transporter (DMT) superfamily. 10 TMS drug/metabolite exporter (DME) (TC 2.A.7.3) family.</text>
</comment>
<sequence>MMLVLRFANLYVEPMAIFLIFLNAFIWSSSFALSKSAMDAASPLFVTGSRMVLAGIVLFGLLLFKRESFRLPRQAVMPIVLLSVIGFYLTNVLEFIGLQGLSSSKACFIYGFSPFTAAFCSYVQLREVVTWKKLGGLSLGLVSYLVYLLFGGGEDVSEWGWQLGMPELLLIVATCLSSYGWTLLRKLERQCESLSITAINAYAMVIAGILSLAHSAITEVWNPLPVENPVLFLQSIGALVIFSNLICYNLFAKLLRSFSSTFLSFCNLVMPLFASFFGWLLLGESFPPGLLFAVGFMVLGCRLIYHEEFRQGYVLSSE</sequence>
<organism>
    <name type="scientific">Chlamydia muridarum (strain MoPn / Nigg)</name>
    <dbReference type="NCBI Taxonomy" id="243161"/>
    <lineage>
        <taxon>Bacteria</taxon>
        <taxon>Pseudomonadati</taxon>
        <taxon>Chlamydiota</taxon>
        <taxon>Chlamydiia</taxon>
        <taxon>Chlamydiales</taxon>
        <taxon>Chlamydiaceae</taxon>
        <taxon>Chlamydia/Chlamydophila group</taxon>
        <taxon>Chlamydia</taxon>
    </lineage>
</organism>
<protein>
    <recommendedName>
        <fullName>S-adenosylmethionine/S-adenosylhomocysteine transporter</fullName>
        <shortName>SAM/SAH transporter</shortName>
        <shortName>SAMHT</shortName>
    </recommendedName>
</protein>